<reference key="1">
    <citation type="journal article" date="2006" name="PLoS Genet.">
        <title>Comparative genomics of emerging human ehrlichiosis agents.</title>
        <authorList>
            <person name="Dunning Hotopp J.C."/>
            <person name="Lin M."/>
            <person name="Madupu R."/>
            <person name="Crabtree J."/>
            <person name="Angiuoli S.V."/>
            <person name="Eisen J.A."/>
            <person name="Seshadri R."/>
            <person name="Ren Q."/>
            <person name="Wu M."/>
            <person name="Utterback T.R."/>
            <person name="Smith S."/>
            <person name="Lewis M."/>
            <person name="Khouri H."/>
            <person name="Zhang C."/>
            <person name="Niu H."/>
            <person name="Lin Q."/>
            <person name="Ohashi N."/>
            <person name="Zhi N."/>
            <person name="Nelson W.C."/>
            <person name="Brinkac L.M."/>
            <person name="Dodson R.J."/>
            <person name="Rosovitz M.J."/>
            <person name="Sundaram J.P."/>
            <person name="Daugherty S.C."/>
            <person name="Davidsen T."/>
            <person name="Durkin A.S."/>
            <person name="Gwinn M.L."/>
            <person name="Haft D.H."/>
            <person name="Selengut J.D."/>
            <person name="Sullivan S.A."/>
            <person name="Zafar N."/>
            <person name="Zhou L."/>
            <person name="Benahmed F."/>
            <person name="Forberger H."/>
            <person name="Halpin R."/>
            <person name="Mulligan S."/>
            <person name="Robinson J."/>
            <person name="White O."/>
            <person name="Rikihisa Y."/>
            <person name="Tettelin H."/>
        </authorList>
    </citation>
    <scope>NUCLEOTIDE SEQUENCE [LARGE SCALE GENOMIC DNA]</scope>
    <source>
        <strain>ATCC VR-367 / Miyayama</strain>
    </source>
</reference>
<dbReference type="EC" id="3.6.5.3" evidence="2"/>
<dbReference type="EMBL" id="CP000237">
    <property type="protein sequence ID" value="ABD45992.1"/>
    <property type="molecule type" value="Genomic_DNA"/>
</dbReference>
<dbReference type="RefSeq" id="WP_011452069.1">
    <property type="nucleotide sequence ID" value="NC_007798.1"/>
</dbReference>
<dbReference type="SMR" id="Q2GD83"/>
<dbReference type="STRING" id="222891.NSE_0686"/>
<dbReference type="KEGG" id="nse:NSE_0686"/>
<dbReference type="eggNOG" id="COG0050">
    <property type="taxonomic scope" value="Bacteria"/>
</dbReference>
<dbReference type="HOGENOM" id="CLU_007265_0_1_5"/>
<dbReference type="OrthoDB" id="9803139at2"/>
<dbReference type="Proteomes" id="UP000001942">
    <property type="component" value="Chromosome"/>
</dbReference>
<dbReference type="GO" id="GO:0005737">
    <property type="term" value="C:cytoplasm"/>
    <property type="evidence" value="ECO:0007669"/>
    <property type="project" value="UniProtKB-SubCell"/>
</dbReference>
<dbReference type="GO" id="GO:0005525">
    <property type="term" value="F:GTP binding"/>
    <property type="evidence" value="ECO:0007669"/>
    <property type="project" value="UniProtKB-UniRule"/>
</dbReference>
<dbReference type="GO" id="GO:0003924">
    <property type="term" value="F:GTPase activity"/>
    <property type="evidence" value="ECO:0007669"/>
    <property type="project" value="InterPro"/>
</dbReference>
<dbReference type="GO" id="GO:0003746">
    <property type="term" value="F:translation elongation factor activity"/>
    <property type="evidence" value="ECO:0007669"/>
    <property type="project" value="UniProtKB-UniRule"/>
</dbReference>
<dbReference type="CDD" id="cd01884">
    <property type="entry name" value="EF_Tu"/>
    <property type="match status" value="1"/>
</dbReference>
<dbReference type="CDD" id="cd03697">
    <property type="entry name" value="EFTU_II"/>
    <property type="match status" value="1"/>
</dbReference>
<dbReference type="CDD" id="cd03707">
    <property type="entry name" value="EFTU_III"/>
    <property type="match status" value="1"/>
</dbReference>
<dbReference type="FunFam" id="2.40.30.10:FF:000001">
    <property type="entry name" value="Elongation factor Tu"/>
    <property type="match status" value="1"/>
</dbReference>
<dbReference type="FunFam" id="3.40.50.300:FF:000003">
    <property type="entry name" value="Elongation factor Tu"/>
    <property type="match status" value="1"/>
</dbReference>
<dbReference type="Gene3D" id="3.40.50.300">
    <property type="entry name" value="P-loop containing nucleotide triphosphate hydrolases"/>
    <property type="match status" value="1"/>
</dbReference>
<dbReference type="Gene3D" id="2.40.30.10">
    <property type="entry name" value="Translation factors"/>
    <property type="match status" value="2"/>
</dbReference>
<dbReference type="HAMAP" id="MF_00118_B">
    <property type="entry name" value="EF_Tu_B"/>
    <property type="match status" value="1"/>
</dbReference>
<dbReference type="InterPro" id="IPR041709">
    <property type="entry name" value="EF-Tu_GTP-bd"/>
</dbReference>
<dbReference type="InterPro" id="IPR050055">
    <property type="entry name" value="EF-Tu_GTPase"/>
</dbReference>
<dbReference type="InterPro" id="IPR004161">
    <property type="entry name" value="EFTu-like_2"/>
</dbReference>
<dbReference type="InterPro" id="IPR033720">
    <property type="entry name" value="EFTU_2"/>
</dbReference>
<dbReference type="InterPro" id="IPR031157">
    <property type="entry name" value="G_TR_CS"/>
</dbReference>
<dbReference type="InterPro" id="IPR027417">
    <property type="entry name" value="P-loop_NTPase"/>
</dbReference>
<dbReference type="InterPro" id="IPR000795">
    <property type="entry name" value="T_Tr_GTP-bd_dom"/>
</dbReference>
<dbReference type="InterPro" id="IPR009000">
    <property type="entry name" value="Transl_B-barrel_sf"/>
</dbReference>
<dbReference type="InterPro" id="IPR009001">
    <property type="entry name" value="Transl_elong_EF1A/Init_IF2_C"/>
</dbReference>
<dbReference type="InterPro" id="IPR004541">
    <property type="entry name" value="Transl_elong_EFTu/EF1A_bac/org"/>
</dbReference>
<dbReference type="InterPro" id="IPR004160">
    <property type="entry name" value="Transl_elong_EFTu/EF1A_C"/>
</dbReference>
<dbReference type="NCBIfam" id="TIGR00485">
    <property type="entry name" value="EF-Tu"/>
    <property type="match status" value="1"/>
</dbReference>
<dbReference type="NCBIfam" id="NF000766">
    <property type="entry name" value="PRK00049.1"/>
    <property type="match status" value="1"/>
</dbReference>
<dbReference type="NCBIfam" id="NF009372">
    <property type="entry name" value="PRK12735.1"/>
    <property type="match status" value="1"/>
</dbReference>
<dbReference type="NCBIfam" id="NF009373">
    <property type="entry name" value="PRK12736.1"/>
    <property type="match status" value="1"/>
</dbReference>
<dbReference type="PANTHER" id="PTHR43721:SF22">
    <property type="entry name" value="ELONGATION FACTOR TU, MITOCHONDRIAL"/>
    <property type="match status" value="1"/>
</dbReference>
<dbReference type="PANTHER" id="PTHR43721">
    <property type="entry name" value="ELONGATION FACTOR TU-RELATED"/>
    <property type="match status" value="1"/>
</dbReference>
<dbReference type="Pfam" id="PF00009">
    <property type="entry name" value="GTP_EFTU"/>
    <property type="match status" value="1"/>
</dbReference>
<dbReference type="Pfam" id="PF03144">
    <property type="entry name" value="GTP_EFTU_D2"/>
    <property type="match status" value="1"/>
</dbReference>
<dbReference type="Pfam" id="PF03143">
    <property type="entry name" value="GTP_EFTU_D3"/>
    <property type="match status" value="1"/>
</dbReference>
<dbReference type="PRINTS" id="PR00315">
    <property type="entry name" value="ELONGATNFCT"/>
</dbReference>
<dbReference type="SUPFAM" id="SSF50465">
    <property type="entry name" value="EF-Tu/eEF-1alpha/eIF2-gamma C-terminal domain"/>
    <property type="match status" value="1"/>
</dbReference>
<dbReference type="SUPFAM" id="SSF52540">
    <property type="entry name" value="P-loop containing nucleoside triphosphate hydrolases"/>
    <property type="match status" value="1"/>
</dbReference>
<dbReference type="SUPFAM" id="SSF50447">
    <property type="entry name" value="Translation proteins"/>
    <property type="match status" value="1"/>
</dbReference>
<dbReference type="PROSITE" id="PS00301">
    <property type="entry name" value="G_TR_1"/>
    <property type="match status" value="1"/>
</dbReference>
<dbReference type="PROSITE" id="PS51722">
    <property type="entry name" value="G_TR_2"/>
    <property type="match status" value="1"/>
</dbReference>
<accession>Q2GD83</accession>
<comment type="function">
    <text evidence="2">GTP hydrolase that promotes the GTP-dependent binding of aminoacyl-tRNA to the A-site of ribosomes during protein biosynthesis.</text>
</comment>
<comment type="catalytic activity">
    <reaction evidence="2">
        <text>GTP + H2O = GDP + phosphate + H(+)</text>
        <dbReference type="Rhea" id="RHEA:19669"/>
        <dbReference type="ChEBI" id="CHEBI:15377"/>
        <dbReference type="ChEBI" id="CHEBI:15378"/>
        <dbReference type="ChEBI" id="CHEBI:37565"/>
        <dbReference type="ChEBI" id="CHEBI:43474"/>
        <dbReference type="ChEBI" id="CHEBI:58189"/>
        <dbReference type="EC" id="3.6.5.3"/>
    </reaction>
    <physiologicalReaction direction="left-to-right" evidence="2">
        <dbReference type="Rhea" id="RHEA:19670"/>
    </physiologicalReaction>
</comment>
<comment type="subunit">
    <text evidence="2">Monomer.</text>
</comment>
<comment type="subcellular location">
    <subcellularLocation>
        <location evidence="2">Cytoplasm</location>
    </subcellularLocation>
</comment>
<comment type="similarity">
    <text evidence="2">Belongs to the TRAFAC class translation factor GTPase superfamily. Classic translation factor GTPase family. EF-Tu/EF-1A subfamily.</text>
</comment>
<evidence type="ECO:0000250" key="1"/>
<evidence type="ECO:0000255" key="2">
    <source>
        <dbReference type="HAMAP-Rule" id="MF_00118"/>
    </source>
</evidence>
<name>EFTU_NEOSM</name>
<protein>
    <recommendedName>
        <fullName evidence="2">Elongation factor Tu</fullName>
        <shortName evidence="2">EF-Tu</shortName>
        <ecNumber evidence="2">3.6.5.3</ecNumber>
    </recommendedName>
</protein>
<proteinExistence type="inferred from homology"/>
<keyword id="KW-0963">Cytoplasm</keyword>
<keyword id="KW-0251">Elongation factor</keyword>
<keyword id="KW-0342">GTP-binding</keyword>
<keyword id="KW-0378">Hydrolase</keyword>
<keyword id="KW-0460">Magnesium</keyword>
<keyword id="KW-0479">Metal-binding</keyword>
<keyword id="KW-0547">Nucleotide-binding</keyword>
<keyword id="KW-0648">Protein biosynthesis</keyword>
<sequence length="430" mass="46705">MAVKQKQVFVNDRPHLNIGTIGHVDHGKTTLTAAITKFCSEEGGGYEADFRAYDNIDKAPEERQRGITISTAHVEYKTPERHYAHVDCPGHADYIKNMITGAAQMDGAILVVAGTDGAMQQTKEHILLAKQVGVGSIVVYINKCDSSELDEELLELVESDIKDLLISHGFDLPEDEEDGSNPAIIRGSALLALNGEESELGKGSIRKLLAACDKYIALPERAVDGDFLMSIEDVFSISGRGTVVTGKIERGCIKVGDGVEIVGIRDTQKTTCTGVEMFNKLVEQGEAGFNVGILLRGSKREDVCRGQVLCKPGSITPHRKLRARIVTLTKEEGGRRTGFVSGYKPQFYFRTTDVTGTAYLPVDGAEIVMPGDDLEIFVELLNPIAMEKGSRFAIREGGVTVGAGQVLEIMDSKTDAEIAKMFKIVRAVKN</sequence>
<organism>
    <name type="scientific">Neorickettsia sennetsu (strain ATCC VR-367 / Miyayama)</name>
    <name type="common">Ehrlichia sennetsu</name>
    <dbReference type="NCBI Taxonomy" id="222891"/>
    <lineage>
        <taxon>Bacteria</taxon>
        <taxon>Pseudomonadati</taxon>
        <taxon>Pseudomonadota</taxon>
        <taxon>Alphaproteobacteria</taxon>
        <taxon>Rickettsiales</taxon>
        <taxon>Anaplasmataceae</taxon>
        <taxon>Neorickettsia</taxon>
    </lineage>
</organism>
<gene>
    <name evidence="2" type="primary">tuf</name>
    <name type="ordered locus">NSE_0686</name>
</gene>
<feature type="chain" id="PRO_0000337442" description="Elongation factor Tu">
    <location>
        <begin position="1"/>
        <end position="430"/>
    </location>
</feature>
<feature type="domain" description="tr-type G">
    <location>
        <begin position="13"/>
        <end position="220"/>
    </location>
</feature>
<feature type="region of interest" description="G1" evidence="1">
    <location>
        <begin position="22"/>
        <end position="29"/>
    </location>
</feature>
<feature type="region of interest" description="G2" evidence="1">
    <location>
        <begin position="66"/>
        <end position="70"/>
    </location>
</feature>
<feature type="region of interest" description="G3" evidence="1">
    <location>
        <begin position="87"/>
        <end position="90"/>
    </location>
</feature>
<feature type="region of interest" description="G4" evidence="1">
    <location>
        <begin position="142"/>
        <end position="145"/>
    </location>
</feature>
<feature type="region of interest" description="G5" evidence="1">
    <location>
        <begin position="188"/>
        <end position="190"/>
    </location>
</feature>
<feature type="binding site" evidence="2">
    <location>
        <begin position="22"/>
        <end position="29"/>
    </location>
    <ligand>
        <name>GTP</name>
        <dbReference type="ChEBI" id="CHEBI:37565"/>
    </ligand>
</feature>
<feature type="binding site" evidence="2">
    <location>
        <position position="29"/>
    </location>
    <ligand>
        <name>Mg(2+)</name>
        <dbReference type="ChEBI" id="CHEBI:18420"/>
    </ligand>
</feature>
<feature type="binding site" evidence="2">
    <location>
        <begin position="87"/>
        <end position="91"/>
    </location>
    <ligand>
        <name>GTP</name>
        <dbReference type="ChEBI" id="CHEBI:37565"/>
    </ligand>
</feature>
<feature type="binding site" evidence="2">
    <location>
        <begin position="142"/>
        <end position="145"/>
    </location>
    <ligand>
        <name>GTP</name>
        <dbReference type="ChEBI" id="CHEBI:37565"/>
    </ligand>
</feature>